<proteinExistence type="evidence at protein level"/>
<gene>
    <name type="primary">NNT</name>
</gene>
<protein>
    <recommendedName>
        <fullName>NAD(P) transhydrogenase, mitochondrial</fullName>
        <ecNumber evidence="3">7.1.1.1</ecNumber>
    </recommendedName>
    <alternativeName>
        <fullName>Nicotinamide nucleotide transhydrogenase</fullName>
    </alternativeName>
    <alternativeName>
        <fullName>Pyridine nucleotide transhydrogenase</fullName>
    </alternativeName>
</protein>
<evidence type="ECO:0000250" key="1">
    <source>
        <dbReference type="UniProtKB" id="P07001"/>
    </source>
</evidence>
<evidence type="ECO:0000250" key="2">
    <source>
        <dbReference type="UniProtKB" id="Q13423"/>
    </source>
</evidence>
<evidence type="ECO:0000250" key="3">
    <source>
        <dbReference type="UniProtKB" id="Q2RSB2"/>
    </source>
</evidence>
<evidence type="ECO:0000250" key="4">
    <source>
        <dbReference type="UniProtKB" id="Q61941"/>
    </source>
</evidence>
<evidence type="ECO:0000250" key="5">
    <source>
        <dbReference type="UniProtKB" id="W5PFI3"/>
    </source>
</evidence>
<evidence type="ECO:0000255" key="6"/>
<evidence type="ECO:0000269" key="7">
    <source>
    </source>
</evidence>
<evidence type="ECO:0000269" key="8">
    <source>
    </source>
</evidence>
<evidence type="ECO:0000269" key="9">
    <source>
    </source>
</evidence>
<evidence type="ECO:0000305" key="10"/>
<evidence type="ECO:0007744" key="11">
    <source>
        <dbReference type="PDB" id="1D4O"/>
    </source>
</evidence>
<evidence type="ECO:0007829" key="12">
    <source>
        <dbReference type="PDB" id="1D4O"/>
    </source>
</evidence>
<reference key="1">
    <citation type="submission" date="2006-04" db="EMBL/GenBank/DDBJ databases">
        <authorList>
            <consortium name="NIH - Mammalian Gene Collection (MGC) project"/>
        </authorList>
    </citation>
    <scope>NUCLEOTIDE SEQUENCE [LARGE SCALE MRNA]</scope>
    <source>
        <strain>Hereford</strain>
        <tissue>Uterus</tissue>
    </source>
</reference>
<reference key="2">
    <citation type="journal article" date="1988" name="Biochem. Biophys. Res. Commun.">
        <title>Amino acid sequence of the signal peptide of mitochondrial nicotinamide nucleotide transhydrogenase as determined from the sequence of its messenger RNA.</title>
        <authorList>
            <person name="Yamaguchi M."/>
            <person name="Hatefi Y."/>
            <person name="Trach K."/>
            <person name="Hoch J.A."/>
        </authorList>
    </citation>
    <scope>NUCLEOTIDE SEQUENCE [MRNA] OF 1-75</scope>
</reference>
<reference key="3">
    <citation type="journal article" date="1988" name="J. Biol. Chem.">
        <title>The primary structure of the mitochondrial energy-linked nicotinamide nucleotide transhydrogenase deduced from the sequence of cDNA clones.</title>
        <authorList>
            <person name="Yamaguchi M."/>
            <person name="Hatefi Y."/>
            <person name="Trach K."/>
            <person name="Hoch J.A."/>
        </authorList>
    </citation>
    <scope>NUCLEOTIDE SEQUENCE [MRNA] OF 52-1086</scope>
    <scope>PROTEIN SEQUENCE OF 44-58</scope>
</reference>
<reference key="4">
    <citation type="journal article" date="1987" name="Biochem. Int.">
        <title>Characterization of the substrate-binding sites of the mitochondrial nicotinamide nucleotide transhydrogenase.</title>
        <authorList>
            <person name="Wakabayashi S."/>
            <person name="Hatefi Y."/>
        </authorList>
    </citation>
    <scope>PROTEIN SEQUENCE OF 280-290 AND 1044-1049</scope>
</reference>
<reference key="5">
    <citation type="journal article" date="1987" name="Biochem. Int.">
        <title>Amino acid sequence of the NAD (H)-binding region of the mitochondrial nicotinamide nucleotide transhydrogenase modified by N,N'-dicyclohexylcarbodiimide.</title>
        <authorList>
            <person name="Wakabayashi S."/>
            <person name="Hatefi Y."/>
        </authorList>
    </citation>
    <scope>PROTEIN SEQUENCE OF 291-302</scope>
</reference>
<reference key="6">
    <citation type="journal article" date="1991" name="J. Biol. Chem.">
        <title>Mitochondrial energy-linked nicotinamide nucleotide transhydrogenase. Membrane topography of the bovine enzyme.</title>
        <authorList>
            <person name="Yamaguchi M."/>
            <person name="Hatefi Y."/>
        </authorList>
    </citation>
    <scope>SUBUNIT</scope>
    <scope>TOPOLOGY</scope>
</reference>
<reference evidence="11" key="7">
    <citation type="journal article" date="1999" name="Nat. Struct. Biol.">
        <title>Crystal structure of transhydrogenase domain III at 1.2 A resolution.</title>
        <authorList>
            <person name="Prasad G.S."/>
            <person name="Sridhar V."/>
            <person name="Yamaguchi M."/>
            <person name="Hatefi Y."/>
            <person name="Stout C.D."/>
        </authorList>
    </citation>
    <scope>X-RAY CRYSTALLOGRAPHY (1.2 ANGSTROMS) OF 903-1086</scope>
</reference>
<comment type="function">
    <text evidence="1 2">The transhydrogenation between NADH and NADP is coupled to respiration and ATP hydrolysis and functions as a proton pump across the membrane (By similarity). May play a role in reactive oxygen species (ROS) detoxification in the adrenal gland (By similarity).</text>
</comment>
<comment type="catalytic activity">
    <reaction evidence="3">
        <text>NAD(+) + NADPH + H(+)(in) = NADH + NADP(+) + H(+)(out)</text>
        <dbReference type="Rhea" id="RHEA:47992"/>
        <dbReference type="ChEBI" id="CHEBI:15378"/>
        <dbReference type="ChEBI" id="CHEBI:57540"/>
        <dbReference type="ChEBI" id="CHEBI:57783"/>
        <dbReference type="ChEBI" id="CHEBI:57945"/>
        <dbReference type="ChEBI" id="CHEBI:58349"/>
        <dbReference type="EC" id="7.1.1.1"/>
    </reaction>
</comment>
<comment type="subunit">
    <text evidence="8">Homodimer.</text>
</comment>
<comment type="subcellular location">
    <subcellularLocation>
        <location evidence="10">Mitochondrion inner membrane</location>
        <topology evidence="10">Multi-pass membrane protein</topology>
        <orientation evidence="10">Matrix side</orientation>
    </subcellularLocation>
</comment>
<comment type="similarity">
    <text evidence="10">In the N-terminal section; belongs to the AlaDH/PNT family.</text>
</comment>
<comment type="similarity">
    <text evidence="10">In the C-terminal section; belongs to the PNT beta subunit family.</text>
</comment>
<organism>
    <name type="scientific">Bos taurus</name>
    <name type="common">Bovine</name>
    <dbReference type="NCBI Taxonomy" id="9913"/>
    <lineage>
        <taxon>Eukaryota</taxon>
        <taxon>Metazoa</taxon>
        <taxon>Chordata</taxon>
        <taxon>Craniata</taxon>
        <taxon>Vertebrata</taxon>
        <taxon>Euteleostomi</taxon>
        <taxon>Mammalia</taxon>
        <taxon>Eutheria</taxon>
        <taxon>Laurasiatheria</taxon>
        <taxon>Artiodactyla</taxon>
        <taxon>Ruminantia</taxon>
        <taxon>Pecora</taxon>
        <taxon>Bovidae</taxon>
        <taxon>Bovinae</taxon>
        <taxon>Bos</taxon>
    </lineage>
</organism>
<keyword id="KW-0002">3D-structure</keyword>
<keyword id="KW-0007">Acetylation</keyword>
<keyword id="KW-0903">Direct protein sequencing</keyword>
<keyword id="KW-0472">Membrane</keyword>
<keyword id="KW-0496">Mitochondrion</keyword>
<keyword id="KW-0999">Mitochondrion inner membrane</keyword>
<keyword id="KW-0520">NAD</keyword>
<keyword id="KW-0521">NADP</keyword>
<keyword id="KW-0547">Nucleotide-binding</keyword>
<keyword id="KW-1185">Reference proteome</keyword>
<keyword id="KW-0809">Transit peptide</keyword>
<keyword id="KW-1278">Translocase</keyword>
<keyword id="KW-0812">Transmembrane</keyword>
<keyword id="KW-1133">Transmembrane helix</keyword>
<name>NNTM_BOVIN</name>
<dbReference type="EC" id="7.1.1.1" evidence="3"/>
<dbReference type="EMBL" id="BC114660">
    <property type="protein sequence ID" value="AAI14661.1"/>
    <property type="molecule type" value="mRNA"/>
</dbReference>
<dbReference type="EMBL" id="J03534">
    <property type="protein sequence ID" value="AAA30660.1"/>
    <property type="molecule type" value="mRNA"/>
</dbReference>
<dbReference type="EMBL" id="M22754">
    <property type="protein sequence ID" value="AAA30717.1"/>
    <property type="molecule type" value="mRNA"/>
</dbReference>
<dbReference type="EMBL" id="L02543">
    <property type="protein sequence ID" value="AAA21440.1"/>
    <property type="molecule type" value="mRNA"/>
</dbReference>
<dbReference type="PIR" id="A31670">
    <property type="entry name" value="DEBOXM"/>
</dbReference>
<dbReference type="RefSeq" id="NP_776368.1">
    <property type="nucleotide sequence ID" value="NM_173943.3"/>
</dbReference>
<dbReference type="RefSeq" id="XP_005221585.1">
    <property type="nucleotide sequence ID" value="XM_005221528.5"/>
</dbReference>
<dbReference type="RefSeq" id="XP_005221586.1">
    <property type="nucleotide sequence ID" value="XM_005221529.5"/>
</dbReference>
<dbReference type="RefSeq" id="XP_005221587.1">
    <property type="nucleotide sequence ID" value="XM_005221530.5"/>
</dbReference>
<dbReference type="PDB" id="1D4O">
    <property type="method" value="X-ray"/>
    <property type="resolution" value="1.21 A"/>
    <property type="chains" value="A=903-1086"/>
</dbReference>
<dbReference type="PDBsum" id="1D4O"/>
<dbReference type="SMR" id="P11024"/>
<dbReference type="FunCoup" id="P11024">
    <property type="interactions" value="951"/>
</dbReference>
<dbReference type="STRING" id="9913.ENSBTAP00000072815"/>
<dbReference type="TCDB" id="3.D.2.3.1">
    <property type="family name" value="the proton-translocating transhydrogenase (pth) family"/>
</dbReference>
<dbReference type="GlyGen" id="P11024">
    <property type="glycosylation" value="1 site, 1 O-linked glycan (1 site)"/>
</dbReference>
<dbReference type="SwissPalm" id="P11024"/>
<dbReference type="PaxDb" id="9913-ENSBTAP00000015769"/>
<dbReference type="PeptideAtlas" id="P11024"/>
<dbReference type="Ensembl" id="ENSBTAT00000015769.4">
    <property type="protein sequence ID" value="ENSBTAP00000015769.2"/>
    <property type="gene ID" value="ENSBTAG00000011885.6"/>
</dbReference>
<dbReference type="GeneID" id="280878"/>
<dbReference type="KEGG" id="bta:280878"/>
<dbReference type="CTD" id="23530"/>
<dbReference type="VEuPathDB" id="HostDB:ENSBTAG00000011885"/>
<dbReference type="VGNC" id="VGNC:32143">
    <property type="gene designation" value="NNT"/>
</dbReference>
<dbReference type="eggNOG" id="ENOG502QQ0A">
    <property type="taxonomic scope" value="Eukaryota"/>
</dbReference>
<dbReference type="GeneTree" id="ENSGT00390000004624"/>
<dbReference type="HOGENOM" id="CLU_003376_1_0_1"/>
<dbReference type="InParanoid" id="P11024"/>
<dbReference type="OMA" id="EQCREVD"/>
<dbReference type="OrthoDB" id="37244at2759"/>
<dbReference type="TreeFam" id="TF300636"/>
<dbReference type="Reactome" id="R-BTA-71403">
    <property type="pathway name" value="Citric acid cycle (TCA cycle)"/>
</dbReference>
<dbReference type="EvolutionaryTrace" id="P11024"/>
<dbReference type="Proteomes" id="UP000009136">
    <property type="component" value="Chromosome 20"/>
</dbReference>
<dbReference type="Bgee" id="ENSBTAG00000011885">
    <property type="expression patterns" value="Expressed in corpus luteum and 105 other cell types or tissues"/>
</dbReference>
<dbReference type="GO" id="GO:0005743">
    <property type="term" value="C:mitochondrial inner membrane"/>
    <property type="evidence" value="ECO:0007669"/>
    <property type="project" value="UniProtKB-SubCell"/>
</dbReference>
<dbReference type="GO" id="GO:0050661">
    <property type="term" value="F:NADP binding"/>
    <property type="evidence" value="ECO:0000318"/>
    <property type="project" value="GO_Central"/>
</dbReference>
<dbReference type="GO" id="GO:0016491">
    <property type="term" value="F:oxidoreductase activity"/>
    <property type="evidence" value="ECO:0007669"/>
    <property type="project" value="InterPro"/>
</dbReference>
<dbReference type="GO" id="GO:0008750">
    <property type="term" value="F:proton-translocating NAD(P)+ transhydrogenase activity"/>
    <property type="evidence" value="ECO:0007669"/>
    <property type="project" value="UniProtKB-EC"/>
</dbReference>
<dbReference type="GO" id="GO:0006740">
    <property type="term" value="P:NADPH regeneration"/>
    <property type="evidence" value="ECO:0000318"/>
    <property type="project" value="GO_Central"/>
</dbReference>
<dbReference type="GO" id="GO:0072593">
    <property type="term" value="P:reactive oxygen species metabolic process"/>
    <property type="evidence" value="ECO:0007669"/>
    <property type="project" value="Ensembl"/>
</dbReference>
<dbReference type="CDD" id="cd05304">
    <property type="entry name" value="Rubrum_tdh"/>
    <property type="match status" value="1"/>
</dbReference>
<dbReference type="FunFam" id="3.40.50.720:FF:000028">
    <property type="entry name" value="NAD(P) transhydrogenase subunit alpha"/>
    <property type="match status" value="1"/>
</dbReference>
<dbReference type="FunFam" id="3.40.50.1220:FF:000002">
    <property type="entry name" value="NAD(P) transhydrogenase subunit beta"/>
    <property type="match status" value="1"/>
</dbReference>
<dbReference type="Gene3D" id="3.40.50.720">
    <property type="entry name" value="NAD(P)-binding Rossmann-like Domain"/>
    <property type="match status" value="2"/>
</dbReference>
<dbReference type="Gene3D" id="3.40.50.1220">
    <property type="entry name" value="TPP-binding domain"/>
    <property type="match status" value="1"/>
</dbReference>
<dbReference type="InterPro" id="IPR008143">
    <property type="entry name" value="Ala_DH/PNT_CS2"/>
</dbReference>
<dbReference type="InterPro" id="IPR008142">
    <property type="entry name" value="AlaDH/PNT_CS1"/>
</dbReference>
<dbReference type="InterPro" id="IPR007886">
    <property type="entry name" value="AlaDH/PNT_N"/>
</dbReference>
<dbReference type="InterPro" id="IPR007698">
    <property type="entry name" value="AlaDH/PNT_NAD(H)-bd"/>
</dbReference>
<dbReference type="InterPro" id="IPR029035">
    <property type="entry name" value="DHS-like_NAD/FAD-binding_dom"/>
</dbReference>
<dbReference type="InterPro" id="IPR036291">
    <property type="entry name" value="NAD(P)-bd_dom_sf"/>
</dbReference>
<dbReference type="InterPro" id="IPR026255">
    <property type="entry name" value="NADP_transhyd_a"/>
</dbReference>
<dbReference type="InterPro" id="IPR024605">
    <property type="entry name" value="NADP_transhyd_a_C"/>
</dbReference>
<dbReference type="InterPro" id="IPR034300">
    <property type="entry name" value="PNTB-like"/>
</dbReference>
<dbReference type="NCBIfam" id="TIGR00561">
    <property type="entry name" value="pntA"/>
    <property type="match status" value="1"/>
</dbReference>
<dbReference type="NCBIfam" id="NF006942">
    <property type="entry name" value="PRK09424.1"/>
    <property type="match status" value="1"/>
</dbReference>
<dbReference type="PANTHER" id="PTHR10160">
    <property type="entry name" value="NAD(P) TRANSHYDROGENASE"/>
    <property type="match status" value="1"/>
</dbReference>
<dbReference type="PANTHER" id="PTHR10160:SF22">
    <property type="entry name" value="NAD(P) TRANSHYDROGENASE, MITOCHONDRIAL"/>
    <property type="match status" value="1"/>
</dbReference>
<dbReference type="Pfam" id="PF01262">
    <property type="entry name" value="AlaDh_PNT_C"/>
    <property type="match status" value="1"/>
</dbReference>
<dbReference type="Pfam" id="PF05222">
    <property type="entry name" value="AlaDh_PNT_N"/>
    <property type="match status" value="1"/>
</dbReference>
<dbReference type="Pfam" id="PF02233">
    <property type="entry name" value="PNTB"/>
    <property type="match status" value="1"/>
</dbReference>
<dbReference type="Pfam" id="PF12769">
    <property type="entry name" value="PNTB_4TM"/>
    <property type="match status" value="1"/>
</dbReference>
<dbReference type="SMART" id="SM01002">
    <property type="entry name" value="AlaDh_PNT_C"/>
    <property type="match status" value="1"/>
</dbReference>
<dbReference type="SMART" id="SM01003">
    <property type="entry name" value="AlaDh_PNT_N"/>
    <property type="match status" value="1"/>
</dbReference>
<dbReference type="SUPFAM" id="SSF52467">
    <property type="entry name" value="DHS-like NAD/FAD-binding domain"/>
    <property type="match status" value="1"/>
</dbReference>
<dbReference type="SUPFAM" id="SSF52283">
    <property type="entry name" value="Formate/glycerate dehydrogenase catalytic domain-like"/>
    <property type="match status" value="1"/>
</dbReference>
<dbReference type="SUPFAM" id="SSF51735">
    <property type="entry name" value="NAD(P)-binding Rossmann-fold domains"/>
    <property type="match status" value="1"/>
</dbReference>
<dbReference type="PROSITE" id="PS00836">
    <property type="entry name" value="ALADH_PNT_1"/>
    <property type="match status" value="1"/>
</dbReference>
<dbReference type="PROSITE" id="PS00837">
    <property type="entry name" value="ALADH_PNT_2"/>
    <property type="match status" value="1"/>
</dbReference>
<accession>P11024</accession>
<accession>A4FUB4</accession>
<feature type="transit peptide" description="Mitochondrion" evidence="9">
    <location>
        <begin position="1"/>
        <end position="43"/>
    </location>
</feature>
<feature type="chain" id="PRO_0000001054" description="NAD(P) transhydrogenase, mitochondrial">
    <location>
        <begin position="44"/>
        <end position="1086"/>
    </location>
</feature>
<feature type="topological domain" description="Mitochondrial matrix" evidence="8">
    <location>
        <begin position="44"/>
        <end position="474"/>
    </location>
</feature>
<feature type="transmembrane region" description="Helical" evidence="6">
    <location>
        <begin position="475"/>
        <end position="493"/>
    </location>
</feature>
<feature type="transmembrane region" description="Helical" evidence="6">
    <location>
        <begin position="501"/>
        <end position="521"/>
    </location>
</feature>
<feature type="transmembrane region" description="Helical" evidence="6">
    <location>
        <begin position="527"/>
        <end position="546"/>
    </location>
</feature>
<feature type="transmembrane region" description="Helical" evidence="6">
    <location>
        <begin position="558"/>
        <end position="578"/>
    </location>
</feature>
<feature type="topological domain" description="Mitochondrial matrix" evidence="8">
    <location>
        <begin position="579"/>
        <end position="595"/>
    </location>
</feature>
<feature type="transmembrane region" description="Helical" evidence="6">
    <location>
        <begin position="596"/>
        <end position="616"/>
    </location>
</feature>
<feature type="transmembrane region" description="Helical" evidence="6">
    <location>
        <begin position="622"/>
        <end position="642"/>
    </location>
</feature>
<feature type="transmembrane region" description="Helical" evidence="6">
    <location>
        <begin position="646"/>
        <end position="666"/>
    </location>
</feature>
<feature type="transmembrane region" description="Helical" evidence="6">
    <location>
        <begin position="672"/>
        <end position="691"/>
    </location>
</feature>
<feature type="transmembrane region" description="Helical" evidence="6">
    <location>
        <begin position="702"/>
        <end position="722"/>
    </location>
</feature>
<feature type="topological domain" description="Cytoplasmic" evidence="8">
    <location>
        <begin position="723"/>
        <end position="739"/>
    </location>
</feature>
<feature type="transmembrane region" description="Helical" evidence="6">
    <location>
        <begin position="740"/>
        <end position="760"/>
    </location>
</feature>
<feature type="transmembrane region" description="Helical" evidence="6">
    <location>
        <begin position="778"/>
        <end position="797"/>
    </location>
</feature>
<feature type="transmembrane region" description="Helical" evidence="6">
    <location>
        <begin position="801"/>
        <end position="819"/>
    </location>
</feature>
<feature type="transmembrane region" description="Helical" evidence="6">
    <location>
        <begin position="833"/>
        <end position="853"/>
    </location>
</feature>
<feature type="transmembrane region" description="Helical" evidence="6">
    <location>
        <begin position="857"/>
        <end position="879"/>
    </location>
</feature>
<feature type="topological domain" description="Mitochondrial matrix" evidence="8">
    <location>
        <begin position="880"/>
        <end position="1086"/>
    </location>
</feature>
<feature type="binding site" evidence="1">
    <location>
        <begin position="182"/>
        <end position="184"/>
    </location>
    <ligand>
        <name>NAD(+)</name>
        <dbReference type="ChEBI" id="CHEBI:57540"/>
    </ligand>
</feature>
<feature type="binding site" evidence="1">
    <location>
        <position position="237"/>
    </location>
    <ligand>
        <name>NAD(+)</name>
        <dbReference type="ChEBI" id="CHEBI:57540"/>
    </ligand>
</feature>
<feature type="binding site" evidence="1">
    <location>
        <begin position="257"/>
        <end position="259"/>
    </location>
    <ligand>
        <name>NAD(+)</name>
        <dbReference type="ChEBI" id="CHEBI:57540"/>
    </ligand>
</feature>
<feature type="binding site" evidence="5">
    <location>
        <position position="287"/>
    </location>
    <ligand>
        <name>NAD(+)</name>
        <dbReference type="ChEBI" id="CHEBI:57540"/>
    </ligand>
</feature>
<feature type="binding site" evidence="1">
    <location>
        <position position="300"/>
    </location>
    <ligand>
        <name>NAD(+)</name>
        <dbReference type="ChEBI" id="CHEBI:57540"/>
    </ligand>
</feature>
<feature type="binding site" evidence="1">
    <location>
        <position position="319"/>
    </location>
    <ligand>
        <name>NAD(+)</name>
        <dbReference type="ChEBI" id="CHEBI:57540"/>
    </ligand>
</feature>
<feature type="binding site" evidence="7 11">
    <location>
        <position position="933"/>
    </location>
    <ligand>
        <name>NADP(+)</name>
        <dbReference type="ChEBI" id="CHEBI:58349"/>
    </ligand>
</feature>
<feature type="binding site" evidence="7 11">
    <location>
        <begin position="965"/>
        <end position="970"/>
    </location>
    <ligand>
        <name>NADP(+)</name>
        <dbReference type="ChEBI" id="CHEBI:58349"/>
    </ligand>
</feature>
<feature type="binding site" evidence="7 11">
    <location>
        <begin position="1009"/>
        <end position="1011"/>
    </location>
    <ligand>
        <name>NADP(+)</name>
        <dbReference type="ChEBI" id="CHEBI:58349"/>
    </ligand>
</feature>
<feature type="binding site" evidence="2">
    <location>
        <begin position="1026"/>
        <end position="1027"/>
    </location>
    <ligand>
        <name>NADP(+)</name>
        <dbReference type="ChEBI" id="CHEBI:58349"/>
    </ligand>
</feature>
<feature type="binding site" evidence="7 11">
    <location>
        <begin position="1042"/>
        <end position="1049"/>
    </location>
    <ligand>
        <name>NADP(+)</name>
        <dbReference type="ChEBI" id="CHEBI:58349"/>
    </ligand>
</feature>
<feature type="binding site" evidence="7 11">
    <location>
        <begin position="1068"/>
        <end position="1069"/>
    </location>
    <ligand>
        <name>NADP(+)</name>
        <dbReference type="ChEBI" id="CHEBI:58349"/>
    </ligand>
</feature>
<feature type="modified residue" description="N6-acetyllysine" evidence="2">
    <location>
        <position position="70"/>
    </location>
</feature>
<feature type="modified residue" description="N6-succinyllysine" evidence="4">
    <location>
        <position position="117"/>
    </location>
</feature>
<feature type="modified residue" description="N6-succinyllysine" evidence="4">
    <location>
        <position position="224"/>
    </location>
</feature>
<feature type="modified residue" description="N6-succinyllysine" evidence="4">
    <location>
        <position position="294"/>
    </location>
</feature>
<feature type="modified residue" description="N6-succinyllysine" evidence="4">
    <location>
        <position position="331"/>
    </location>
</feature>
<feature type="modified residue" description="N6-acetyllysine" evidence="2">
    <location>
        <position position="397"/>
    </location>
</feature>
<feature type="modified residue" description="N6-succinyllysine" evidence="4">
    <location>
        <position position="1079"/>
    </location>
</feature>
<feature type="helix" evidence="12">
    <location>
        <begin position="914"/>
        <end position="923"/>
    </location>
</feature>
<feature type="strand" evidence="12">
    <location>
        <begin position="925"/>
        <end position="931"/>
    </location>
</feature>
<feature type="helix" evidence="12">
    <location>
        <begin position="933"/>
        <end position="937"/>
    </location>
</feature>
<feature type="turn" evidence="12">
    <location>
        <begin position="938"/>
        <end position="940"/>
    </location>
</feature>
<feature type="helix" evidence="12">
    <location>
        <begin position="941"/>
        <end position="953"/>
    </location>
</feature>
<feature type="strand" evidence="12">
    <location>
        <begin position="957"/>
        <end position="962"/>
    </location>
</feature>
<feature type="strand" evidence="12">
    <location>
        <begin position="967"/>
        <end position="969"/>
    </location>
</feature>
<feature type="helix" evidence="12">
    <location>
        <begin position="972"/>
        <end position="980"/>
    </location>
</feature>
<feature type="helix" evidence="12">
    <location>
        <begin position="984"/>
        <end position="986"/>
    </location>
</feature>
<feature type="strand" evidence="12">
    <location>
        <begin position="987"/>
        <end position="989"/>
    </location>
</feature>
<feature type="helix" evidence="12">
    <location>
        <begin position="990"/>
        <end position="993"/>
    </location>
</feature>
<feature type="helix" evidence="12">
    <location>
        <begin position="994"/>
        <end position="999"/>
    </location>
</feature>
<feature type="strand" evidence="12">
    <location>
        <begin position="1001"/>
        <end position="1007"/>
    </location>
</feature>
<feature type="helix" evidence="12">
    <location>
        <begin position="1010"/>
        <end position="1012"/>
    </location>
</feature>
<feature type="helix" evidence="12">
    <location>
        <begin position="1015"/>
        <end position="1018"/>
    </location>
</feature>
<feature type="turn" evidence="12">
    <location>
        <begin position="1023"/>
        <end position="1026"/>
    </location>
</feature>
<feature type="helix" evidence="12">
    <location>
        <begin position="1032"/>
        <end position="1034"/>
    </location>
</feature>
<feature type="strand" evidence="12">
    <location>
        <begin position="1038"/>
        <end position="1045"/>
    </location>
</feature>
<feature type="helix" evidence="12">
    <location>
        <begin position="1055"/>
        <end position="1058"/>
    </location>
</feature>
<feature type="strand" evidence="12">
    <location>
        <begin position="1062"/>
        <end position="1067"/>
    </location>
</feature>
<feature type="helix" evidence="12">
    <location>
        <begin position="1069"/>
        <end position="1081"/>
    </location>
</feature>
<sequence length="1086" mass="113854">MANLLKTVVTGCSCPFLSNLGSCKVLPGKKNFLRTFHTHRILWCSAPVKPGIPYKQLTVGVPKEIFQNEKRVALSPAGVQALVKQGFNVVVESGAGEASKFSDDHYRAAGAQIQGAKEVLASDLVVKVRAPMLNPTLGVHEADLLKTSGTLISFIYPAQNPDLLNKLSKRKTTVLAMDQVPRVTIAQGYDALSSMANIAGYKAVVLAANHFGRFFTGQITAAGKVPPAKILIVGGGVAGLASAGAAKSMGAIVRGFDTRAAALEQFKSLGAEPLEVDLKESGEGQGGYAKEMSKEFIEAEMKLFAQQCKEVDILISTALIPGKKAPILFNKEMIESMKEGSVVVDLAAEAGGNFETTKPGELYVHKGITHIGYTDLPSRMATQASTLYSNNITKLLKAISPDKDNFYFEVKDDFDFGTMGHVIRGTVVMKDGQVIFPAPTPKNIPQGAPVKQKTVAELEAEKAATITPFRKTMTSASVYTAGLTGILGLGIAAPNLAFSQMVTTFGLAGIVGYHTVWGVTPALHSPLMSVTNAISGLTAVGGLVLMGGHLYPSTTSQGLAALATFISSVNIAGGFLVTQRMLDMFKRPTDPPEYNYLYLLPAGTFVGGYLASLYSGYNIEQIMYLGSGLCCVGALAGLSTQGTARLGNALGMIGVAGGLAATLGGLKPCPELLAQMSGAMALGGTIGLTIAKRIQISDLPQLVAAFHSLVGLAAVLTCIAEYIIEYPHFATDAAANLTKIVAYLGTYIGGVTFSGSLVAYGKLQGILKSAPLLLPGRHLLNAGLLAGSVGGIIPFMMDPSFTTGITCLGSVSALSAVMGVTLTAAIGGADMPVVITVLNSYSGWALCAEGFLLNNNLLTIVGALIGSSGAILSYIMCVAMNRSLANVILGGYGTTSTAGGKPMEISGTHTEINLDNAIDMIREANSIIITPGYGLCAAKAQYPIADLVKMLSEQGKKVRFGIHPVAGRMPGQLNVLLAEAGVPYDIVLEMDEINHDFPDTDLVLVIGANDTVNSAAQEDPNSIIAGMPVLEVWKSKQVIVMKRSLGVGYAAVDNPIFYKPNTAMLLGDAKKTCDALQAKVRESYQK</sequence>